<evidence type="ECO:0000256" key="1">
    <source>
        <dbReference type="SAM" id="MobiDB-lite"/>
    </source>
</evidence>
<evidence type="ECO:0000269" key="2">
    <source>
    </source>
</evidence>
<evidence type="ECO:0000305" key="3"/>
<feature type="chain" id="PRO_0000295144" description="Uncharacterized protein C9orf50">
    <location>
        <begin position="1"/>
        <end position="431"/>
    </location>
</feature>
<feature type="region of interest" description="Disordered" evidence="1">
    <location>
        <begin position="1"/>
        <end position="37"/>
    </location>
</feature>
<feature type="region of interest" description="Disordered" evidence="1">
    <location>
        <begin position="102"/>
        <end position="132"/>
    </location>
</feature>
<feature type="compositionally biased region" description="Basic and acidic residues" evidence="1">
    <location>
        <begin position="22"/>
        <end position="32"/>
    </location>
</feature>
<feature type="compositionally biased region" description="Low complexity" evidence="1">
    <location>
        <begin position="106"/>
        <end position="121"/>
    </location>
</feature>
<feature type="compositionally biased region" description="Basic and acidic residues" evidence="1">
    <location>
        <begin position="122"/>
        <end position="132"/>
    </location>
</feature>
<feature type="sequence variant" id="VAR_033220" description="In dbSNP:rs918165.">
    <original>R</original>
    <variation>K</variation>
    <location>
        <position position="248"/>
    </location>
</feature>
<feature type="sequence variant" id="VAR_033221" description="In dbSNP:rs3213763.">
    <original>R</original>
    <variation>Q</variation>
    <location>
        <position position="312"/>
    </location>
</feature>
<feature type="sequence variant" id="VAR_033222" description="In dbSNP:rs2302779.">
    <original>R</original>
    <variation>Q</variation>
    <location>
        <position position="381"/>
    </location>
</feature>
<feature type="sequence variant" id="VAR_033223" description="In dbSNP:rs3087721.">
    <original>K</original>
    <variation>R</variation>
    <location>
        <position position="415"/>
    </location>
</feature>
<feature type="sequence conflict" description="In Ref. 1; AK093122." evidence="3" ref="1">
    <original>A</original>
    <variation>T</variation>
    <location>
        <position position="163"/>
    </location>
</feature>
<feature type="sequence conflict" description="In Ref. 3; AAI12354." evidence="3" ref="3">
    <original>P</original>
    <variation>S</variation>
    <location>
        <position position="368"/>
    </location>
</feature>
<reference key="1">
    <citation type="journal article" date="2004" name="Nat. Genet.">
        <title>Complete sequencing and characterization of 21,243 full-length human cDNAs.</title>
        <authorList>
            <person name="Ota T."/>
            <person name="Suzuki Y."/>
            <person name="Nishikawa T."/>
            <person name="Otsuki T."/>
            <person name="Sugiyama T."/>
            <person name="Irie R."/>
            <person name="Wakamatsu A."/>
            <person name="Hayashi K."/>
            <person name="Sato H."/>
            <person name="Nagai K."/>
            <person name="Kimura K."/>
            <person name="Makita H."/>
            <person name="Sekine M."/>
            <person name="Obayashi M."/>
            <person name="Nishi T."/>
            <person name="Shibahara T."/>
            <person name="Tanaka T."/>
            <person name="Ishii S."/>
            <person name="Yamamoto J."/>
            <person name="Saito K."/>
            <person name="Kawai Y."/>
            <person name="Isono Y."/>
            <person name="Nakamura Y."/>
            <person name="Nagahari K."/>
            <person name="Murakami K."/>
            <person name="Yasuda T."/>
            <person name="Iwayanagi T."/>
            <person name="Wagatsuma M."/>
            <person name="Shiratori A."/>
            <person name="Sudo H."/>
            <person name="Hosoiri T."/>
            <person name="Kaku Y."/>
            <person name="Kodaira H."/>
            <person name="Kondo H."/>
            <person name="Sugawara M."/>
            <person name="Takahashi M."/>
            <person name="Kanda K."/>
            <person name="Yokoi T."/>
            <person name="Furuya T."/>
            <person name="Kikkawa E."/>
            <person name="Omura Y."/>
            <person name="Abe K."/>
            <person name="Kamihara K."/>
            <person name="Katsuta N."/>
            <person name="Sato K."/>
            <person name="Tanikawa M."/>
            <person name="Yamazaki M."/>
            <person name="Ninomiya K."/>
            <person name="Ishibashi T."/>
            <person name="Yamashita H."/>
            <person name="Murakawa K."/>
            <person name="Fujimori K."/>
            <person name="Tanai H."/>
            <person name="Kimata M."/>
            <person name="Watanabe M."/>
            <person name="Hiraoka S."/>
            <person name="Chiba Y."/>
            <person name="Ishida S."/>
            <person name="Ono Y."/>
            <person name="Takiguchi S."/>
            <person name="Watanabe S."/>
            <person name="Yosida M."/>
            <person name="Hotuta T."/>
            <person name="Kusano J."/>
            <person name="Kanehori K."/>
            <person name="Takahashi-Fujii A."/>
            <person name="Hara H."/>
            <person name="Tanase T.-O."/>
            <person name="Nomura Y."/>
            <person name="Togiya S."/>
            <person name="Komai F."/>
            <person name="Hara R."/>
            <person name="Takeuchi K."/>
            <person name="Arita M."/>
            <person name="Imose N."/>
            <person name="Musashino K."/>
            <person name="Yuuki H."/>
            <person name="Oshima A."/>
            <person name="Sasaki N."/>
            <person name="Aotsuka S."/>
            <person name="Yoshikawa Y."/>
            <person name="Matsunawa H."/>
            <person name="Ichihara T."/>
            <person name="Shiohata N."/>
            <person name="Sano S."/>
            <person name="Moriya S."/>
            <person name="Momiyama H."/>
            <person name="Satoh N."/>
            <person name="Takami S."/>
            <person name="Terashima Y."/>
            <person name="Suzuki O."/>
            <person name="Nakagawa S."/>
            <person name="Senoh A."/>
            <person name="Mizoguchi H."/>
            <person name="Goto Y."/>
            <person name="Shimizu F."/>
            <person name="Wakebe H."/>
            <person name="Hishigaki H."/>
            <person name="Watanabe T."/>
            <person name="Sugiyama A."/>
            <person name="Takemoto M."/>
            <person name="Kawakami B."/>
            <person name="Yamazaki M."/>
            <person name="Watanabe K."/>
            <person name="Kumagai A."/>
            <person name="Itakura S."/>
            <person name="Fukuzumi Y."/>
            <person name="Fujimori Y."/>
            <person name="Komiyama M."/>
            <person name="Tashiro H."/>
            <person name="Tanigami A."/>
            <person name="Fujiwara T."/>
            <person name="Ono T."/>
            <person name="Yamada K."/>
            <person name="Fujii Y."/>
            <person name="Ozaki K."/>
            <person name="Hirao M."/>
            <person name="Ohmori Y."/>
            <person name="Kawabata A."/>
            <person name="Hikiji T."/>
            <person name="Kobatake N."/>
            <person name="Inagaki H."/>
            <person name="Ikema Y."/>
            <person name="Okamoto S."/>
            <person name="Okitani R."/>
            <person name="Kawakami T."/>
            <person name="Noguchi S."/>
            <person name="Itoh T."/>
            <person name="Shigeta K."/>
            <person name="Senba T."/>
            <person name="Matsumura K."/>
            <person name="Nakajima Y."/>
            <person name="Mizuno T."/>
            <person name="Morinaga M."/>
            <person name="Sasaki M."/>
            <person name="Togashi T."/>
            <person name="Oyama M."/>
            <person name="Hata H."/>
            <person name="Watanabe M."/>
            <person name="Komatsu T."/>
            <person name="Mizushima-Sugano J."/>
            <person name="Satoh T."/>
            <person name="Shirai Y."/>
            <person name="Takahashi Y."/>
            <person name="Nakagawa K."/>
            <person name="Okumura K."/>
            <person name="Nagase T."/>
            <person name="Nomura N."/>
            <person name="Kikuchi H."/>
            <person name="Masuho Y."/>
            <person name="Yamashita R."/>
            <person name="Nakai K."/>
            <person name="Yada T."/>
            <person name="Nakamura Y."/>
            <person name="Ohara O."/>
            <person name="Isogai T."/>
            <person name="Sugano S."/>
        </authorList>
    </citation>
    <scope>NUCLEOTIDE SEQUENCE [LARGE SCALE MRNA]</scope>
    <source>
        <tissue>Testis</tissue>
    </source>
</reference>
<reference key="2">
    <citation type="journal article" date="2004" name="Nature">
        <title>DNA sequence and analysis of human chromosome 9.</title>
        <authorList>
            <person name="Humphray S.J."/>
            <person name="Oliver K."/>
            <person name="Hunt A.R."/>
            <person name="Plumb R.W."/>
            <person name="Loveland J.E."/>
            <person name="Howe K.L."/>
            <person name="Andrews T.D."/>
            <person name="Searle S."/>
            <person name="Hunt S.E."/>
            <person name="Scott C.E."/>
            <person name="Jones M.C."/>
            <person name="Ainscough R."/>
            <person name="Almeida J.P."/>
            <person name="Ambrose K.D."/>
            <person name="Ashwell R.I.S."/>
            <person name="Babbage A.K."/>
            <person name="Babbage S."/>
            <person name="Bagguley C.L."/>
            <person name="Bailey J."/>
            <person name="Banerjee R."/>
            <person name="Barker D.J."/>
            <person name="Barlow K.F."/>
            <person name="Bates K."/>
            <person name="Beasley H."/>
            <person name="Beasley O."/>
            <person name="Bird C.P."/>
            <person name="Bray-Allen S."/>
            <person name="Brown A.J."/>
            <person name="Brown J.Y."/>
            <person name="Burford D."/>
            <person name="Burrill W."/>
            <person name="Burton J."/>
            <person name="Carder C."/>
            <person name="Carter N.P."/>
            <person name="Chapman J.C."/>
            <person name="Chen Y."/>
            <person name="Clarke G."/>
            <person name="Clark S.Y."/>
            <person name="Clee C.M."/>
            <person name="Clegg S."/>
            <person name="Collier R.E."/>
            <person name="Corby N."/>
            <person name="Crosier M."/>
            <person name="Cummings A.T."/>
            <person name="Davies J."/>
            <person name="Dhami P."/>
            <person name="Dunn M."/>
            <person name="Dutta I."/>
            <person name="Dyer L.W."/>
            <person name="Earthrowl M.E."/>
            <person name="Faulkner L."/>
            <person name="Fleming C.J."/>
            <person name="Frankish A."/>
            <person name="Frankland J.A."/>
            <person name="French L."/>
            <person name="Fricker D.G."/>
            <person name="Garner P."/>
            <person name="Garnett J."/>
            <person name="Ghori J."/>
            <person name="Gilbert J.G.R."/>
            <person name="Glison C."/>
            <person name="Grafham D.V."/>
            <person name="Gribble S."/>
            <person name="Griffiths C."/>
            <person name="Griffiths-Jones S."/>
            <person name="Grocock R."/>
            <person name="Guy J."/>
            <person name="Hall R.E."/>
            <person name="Hammond S."/>
            <person name="Harley J.L."/>
            <person name="Harrison E.S.I."/>
            <person name="Hart E.A."/>
            <person name="Heath P.D."/>
            <person name="Henderson C.D."/>
            <person name="Hopkins B.L."/>
            <person name="Howard P.J."/>
            <person name="Howden P.J."/>
            <person name="Huckle E."/>
            <person name="Johnson C."/>
            <person name="Johnson D."/>
            <person name="Joy A.A."/>
            <person name="Kay M."/>
            <person name="Keenan S."/>
            <person name="Kershaw J.K."/>
            <person name="Kimberley A.M."/>
            <person name="King A."/>
            <person name="Knights A."/>
            <person name="Laird G.K."/>
            <person name="Langford C."/>
            <person name="Lawlor S."/>
            <person name="Leongamornlert D.A."/>
            <person name="Leversha M."/>
            <person name="Lloyd C."/>
            <person name="Lloyd D.M."/>
            <person name="Lovell J."/>
            <person name="Martin S."/>
            <person name="Mashreghi-Mohammadi M."/>
            <person name="Matthews L."/>
            <person name="McLaren S."/>
            <person name="McLay K.E."/>
            <person name="McMurray A."/>
            <person name="Milne S."/>
            <person name="Nickerson T."/>
            <person name="Nisbett J."/>
            <person name="Nordsiek G."/>
            <person name="Pearce A.V."/>
            <person name="Peck A.I."/>
            <person name="Porter K.M."/>
            <person name="Pandian R."/>
            <person name="Pelan S."/>
            <person name="Phillimore B."/>
            <person name="Povey S."/>
            <person name="Ramsey Y."/>
            <person name="Rand V."/>
            <person name="Scharfe M."/>
            <person name="Sehra H.K."/>
            <person name="Shownkeen R."/>
            <person name="Sims S.K."/>
            <person name="Skuce C.D."/>
            <person name="Smith M."/>
            <person name="Steward C.A."/>
            <person name="Swarbreck D."/>
            <person name="Sycamore N."/>
            <person name="Tester J."/>
            <person name="Thorpe A."/>
            <person name="Tracey A."/>
            <person name="Tromans A."/>
            <person name="Thomas D.W."/>
            <person name="Wall M."/>
            <person name="Wallis J.M."/>
            <person name="West A.P."/>
            <person name="Whitehead S.L."/>
            <person name="Willey D.L."/>
            <person name="Williams S.A."/>
            <person name="Wilming L."/>
            <person name="Wray P.W."/>
            <person name="Young L."/>
            <person name="Ashurst J.L."/>
            <person name="Coulson A."/>
            <person name="Blocker H."/>
            <person name="Durbin R.M."/>
            <person name="Sulston J.E."/>
            <person name="Hubbard T."/>
            <person name="Jackson M.J."/>
            <person name="Bentley D.R."/>
            <person name="Beck S."/>
            <person name="Rogers J."/>
            <person name="Dunham I."/>
        </authorList>
    </citation>
    <scope>NUCLEOTIDE SEQUENCE [LARGE SCALE GENOMIC DNA]</scope>
</reference>
<reference key="3">
    <citation type="journal article" date="2004" name="Genome Res.">
        <title>The status, quality, and expansion of the NIH full-length cDNA project: the Mammalian Gene Collection (MGC).</title>
        <authorList>
            <consortium name="The MGC Project Team"/>
        </authorList>
    </citation>
    <scope>NUCLEOTIDE SEQUENCE [LARGE SCALE MRNA] OF 363-431</scope>
</reference>
<reference key="4">
    <citation type="journal article" date="2019" name="J. Proteome Res.">
        <title>Cell Type-Specific Expression of Testis Elevated Genes Based on Transcriptomics and Antibody-Based Proteomics.</title>
        <authorList>
            <person name="Pineau C."/>
            <person name="Hikmet F."/>
            <person name="Zhang C."/>
            <person name="Oksvold P."/>
            <person name="Chen S."/>
            <person name="Fagerberg L."/>
            <person name="Uhlen M."/>
            <person name="Lindskog C."/>
        </authorList>
    </citation>
    <scope>SUBCELLULAR LOCATION</scope>
</reference>
<gene>
    <name type="primary">C9orf50</name>
</gene>
<protein>
    <recommendedName>
        <fullName>Uncharacterized protein C9orf50</fullName>
    </recommendedName>
</protein>
<proteinExistence type="evidence at transcript level"/>
<sequence>MFWRRLRPGAQDLAPKGLPGDGDFRRSSDPRLPKLTPPALRAALGARGSGDWRIPGGGAAWWPEGDAKPGVGVGRLPPRLPALLTATRRAVRKRGLLRSLLPPPLLSAGASRESAPRQPGPGERERPRRRVAREDPDFLGAFLGELLPSRFREFLHQLQEKCAEEPEPLTSPAPQHQRGVLEHCPGSPRCPNCSFLPDLWGQSSHLQDSLTKISLQQTPILGPLKGDHSQFTTVRKANHRPHGAQVPRLKAALTHNPSGEGSRPCRQRCPFRVRFADETLQDTTLRYWERRRSVQQSVIVNQKAALPVASERVFGSVGKRLESLPKALYPGAKEETLASSSCWDCAGLSTQKTQGYLSEDTSMNSSLPFCSWKKAAAQRPRSSLRAFLDPHRNLEQESLLPNRVLQSVLKQGCPKGYHLLLASATLQPDKR</sequence>
<organism>
    <name type="scientific">Homo sapiens</name>
    <name type="common">Human</name>
    <dbReference type="NCBI Taxonomy" id="9606"/>
    <lineage>
        <taxon>Eukaryota</taxon>
        <taxon>Metazoa</taxon>
        <taxon>Chordata</taxon>
        <taxon>Craniata</taxon>
        <taxon>Vertebrata</taxon>
        <taxon>Euteleostomi</taxon>
        <taxon>Mammalia</taxon>
        <taxon>Eutheria</taxon>
        <taxon>Euarchontoglires</taxon>
        <taxon>Primates</taxon>
        <taxon>Haplorrhini</taxon>
        <taxon>Catarrhini</taxon>
        <taxon>Hominidae</taxon>
        <taxon>Homo</taxon>
    </lineage>
</organism>
<keyword id="KW-0963">Cytoplasm</keyword>
<keyword id="KW-1185">Reference proteome</keyword>
<comment type="subcellular location">
    <subcellularLocation>
        <location evidence="2">Cytoplasm</location>
    </subcellularLocation>
</comment>
<comment type="sequence caution" evidence="3">
    <conflict type="erroneous termination">
        <sequence resource="EMBL" id="AK093122"/>
    </conflict>
    <text>Truncated C-terminus.</text>
</comment>
<name>CI050_HUMAN</name>
<accession>Q5SZB4</accession>
<accession>Q2M1I2</accession>
<accession>Q8NA65</accession>
<dbReference type="EMBL" id="AK093122">
    <property type="status" value="NOT_ANNOTATED_CDS"/>
    <property type="molecule type" value="mRNA"/>
</dbReference>
<dbReference type="EMBL" id="AL590369">
    <property type="status" value="NOT_ANNOTATED_CDS"/>
    <property type="molecule type" value="Genomic_DNA"/>
</dbReference>
<dbReference type="EMBL" id="AL391056">
    <property type="status" value="NOT_ANNOTATED_CDS"/>
    <property type="molecule type" value="Genomic_DNA"/>
</dbReference>
<dbReference type="EMBL" id="BC112353">
    <property type="protein sequence ID" value="AAI12354.1"/>
    <property type="molecule type" value="mRNA"/>
</dbReference>
<dbReference type="CCDS" id="CCDS35159.1"/>
<dbReference type="RefSeq" id="NP_955382.3">
    <property type="nucleotide sequence ID" value="NM_199350.4"/>
</dbReference>
<dbReference type="RefSeq" id="XP_011516957.1">
    <property type="nucleotide sequence ID" value="XM_011518655.2"/>
</dbReference>
<dbReference type="RefSeq" id="XP_011516958.1">
    <property type="nucleotide sequence ID" value="XM_011518656.2"/>
</dbReference>
<dbReference type="RefSeq" id="XP_054218915.1">
    <property type="nucleotide sequence ID" value="XM_054362940.1"/>
</dbReference>
<dbReference type="RefSeq" id="XP_054218916.1">
    <property type="nucleotide sequence ID" value="XM_054362941.1"/>
</dbReference>
<dbReference type="BioGRID" id="131998">
    <property type="interactions" value="3"/>
</dbReference>
<dbReference type="IntAct" id="Q5SZB4">
    <property type="interactions" value="1"/>
</dbReference>
<dbReference type="STRING" id="9606.ENSP00000361556"/>
<dbReference type="iPTMnet" id="Q5SZB4"/>
<dbReference type="PhosphoSitePlus" id="Q5SZB4"/>
<dbReference type="BioMuta" id="C9orf50"/>
<dbReference type="DMDM" id="74744124"/>
<dbReference type="jPOST" id="Q5SZB4"/>
<dbReference type="MassIVE" id="Q5SZB4"/>
<dbReference type="PaxDb" id="9606-ENSP00000361556"/>
<dbReference type="ProteomicsDB" id="64049"/>
<dbReference type="Antibodypedia" id="17886">
    <property type="antibodies" value="39 antibodies from 8 providers"/>
</dbReference>
<dbReference type="DNASU" id="375759"/>
<dbReference type="Ensembl" id="ENST00000372478.5">
    <property type="protein sequence ID" value="ENSP00000361556.4"/>
    <property type="gene ID" value="ENSG00000179058.8"/>
</dbReference>
<dbReference type="GeneID" id="375759"/>
<dbReference type="KEGG" id="hsa:375759"/>
<dbReference type="MANE-Select" id="ENST00000372478.5">
    <property type="protein sequence ID" value="ENSP00000361556.4"/>
    <property type="RefSeq nucleotide sequence ID" value="NM_199350.4"/>
    <property type="RefSeq protein sequence ID" value="NP_955382.3"/>
</dbReference>
<dbReference type="UCSC" id="uc004byc.4">
    <property type="organism name" value="human"/>
</dbReference>
<dbReference type="AGR" id="HGNC:23677"/>
<dbReference type="CTD" id="375759"/>
<dbReference type="DisGeNET" id="375759"/>
<dbReference type="GeneCards" id="C9orf50"/>
<dbReference type="HGNC" id="HGNC:23677">
    <property type="gene designation" value="C9orf50"/>
</dbReference>
<dbReference type="HPA" id="ENSG00000179058">
    <property type="expression patterns" value="Tissue enriched (testis)"/>
</dbReference>
<dbReference type="neXtProt" id="NX_Q5SZB4"/>
<dbReference type="OpenTargets" id="ENSG00000179058"/>
<dbReference type="PharmGKB" id="PA142672314"/>
<dbReference type="VEuPathDB" id="HostDB:ENSG00000179058"/>
<dbReference type="eggNOG" id="ENOG502TKNG">
    <property type="taxonomic scope" value="Eukaryota"/>
</dbReference>
<dbReference type="GeneTree" id="ENSGT00390000004321"/>
<dbReference type="HOGENOM" id="CLU_052521_1_0_1"/>
<dbReference type="InParanoid" id="Q5SZB4"/>
<dbReference type="OMA" id="WERSCAF"/>
<dbReference type="OrthoDB" id="9837695at2759"/>
<dbReference type="PAN-GO" id="Q5SZB4">
    <property type="GO annotations" value="0 GO annotations based on evolutionary models"/>
</dbReference>
<dbReference type="PhylomeDB" id="Q5SZB4"/>
<dbReference type="TreeFam" id="TF338486"/>
<dbReference type="PathwayCommons" id="Q5SZB4"/>
<dbReference type="SignaLink" id="Q5SZB4"/>
<dbReference type="BioGRID-ORCS" id="375759">
    <property type="hits" value="13 hits in 1129 CRISPR screens"/>
</dbReference>
<dbReference type="GenomeRNAi" id="375759"/>
<dbReference type="Pharos" id="Q5SZB4">
    <property type="development level" value="Tdark"/>
</dbReference>
<dbReference type="PRO" id="PR:Q5SZB4"/>
<dbReference type="Proteomes" id="UP000005640">
    <property type="component" value="Chromosome 9"/>
</dbReference>
<dbReference type="RNAct" id="Q5SZB4">
    <property type="molecule type" value="protein"/>
</dbReference>
<dbReference type="Bgee" id="ENSG00000179058">
    <property type="expression patterns" value="Expressed in left testis and 101 other cell types or tissues"/>
</dbReference>
<dbReference type="ExpressionAtlas" id="Q5SZB4">
    <property type="expression patterns" value="baseline and differential"/>
</dbReference>
<dbReference type="GO" id="GO:0005737">
    <property type="term" value="C:cytoplasm"/>
    <property type="evidence" value="ECO:0000314"/>
    <property type="project" value="UniProtKB"/>
</dbReference>
<dbReference type="InterPro" id="IPR032756">
    <property type="entry name" value="DUF4685"/>
</dbReference>
<dbReference type="PANTHER" id="PTHR36865">
    <property type="entry name" value="RIKEN CDNA 1700001O22 GENE"/>
    <property type="match status" value="1"/>
</dbReference>
<dbReference type="PANTHER" id="PTHR36865:SF1">
    <property type="entry name" value="RIKEN CDNA 1700001O22 GENE"/>
    <property type="match status" value="1"/>
</dbReference>
<dbReference type="Pfam" id="PF15737">
    <property type="entry name" value="DUF4685"/>
    <property type="match status" value="1"/>
</dbReference>